<sequence>MAKIIGIDLGTTNSVVAVMEGGEPKVIANEEGGRTTPSVVGFTKSGERLVGQVAKRQAITNPENTIYSIKRFMGRRQNEVNDEMKMVPYKVKQQGDHIVVEAQGKDYTAPEVSAMILQKLKKAAEDYLGTSVTEAVITVPAYFNDAQRQATKDAGKIAGLDVKRIVNEPTAAALAYGLDKKKDETIAVYDFGGGTFDISILEVGEGVIEVKSTNGDTHLGGDNLDQKIVDWLIDEFKKDEGLDLRAKGNEMALQRLKDAAERAKIELSTALETEINLPFITADATGPKHLVKKLTRAKLEQLVEDILQRSIEPCKKAMADAGVDASKIDEVVLVGGQTRMPRIQEIVKQLFGKEPHRGVNPDEVVAIGAAVQAGVLAGEVKDLLLLDVTPLTLSIETLGGVATPMIPRNTTIPTKKTETFSTAGDSQTEVEVHVLQGERPMAGQNRTLGKFKLSGIPPAPRGVPQIEVTFDIDANGILNVTAKDTATGKDQKITITSSSGLSKEEVERMAKEAEAHSAEDKAKRDEIEARNQLDNLVYNIEKMLKENGDKVSGEEKAEVETALADAKKTLEGTPTAEELNAAREKLTASSHKLAEAMYKANAAAGAAPAGEPAPGEPQAEQKKDDGVIDAEYVDVDEKK</sequence>
<accession>C1F2D2</accession>
<organism>
    <name type="scientific">Acidobacterium capsulatum (strain ATCC 51196 / DSM 11244 / BCRC 80197 / JCM 7670 / NBRC 15755 / NCIMB 13165 / 161)</name>
    <dbReference type="NCBI Taxonomy" id="240015"/>
    <lineage>
        <taxon>Bacteria</taxon>
        <taxon>Pseudomonadati</taxon>
        <taxon>Acidobacteriota</taxon>
        <taxon>Terriglobia</taxon>
        <taxon>Terriglobales</taxon>
        <taxon>Acidobacteriaceae</taxon>
        <taxon>Acidobacterium</taxon>
    </lineage>
</organism>
<reference key="1">
    <citation type="journal article" date="2009" name="Appl. Environ. Microbiol.">
        <title>Three genomes from the phylum Acidobacteria provide insight into the lifestyles of these microorganisms in soils.</title>
        <authorList>
            <person name="Ward N.L."/>
            <person name="Challacombe J.F."/>
            <person name="Janssen P.H."/>
            <person name="Henrissat B."/>
            <person name="Coutinho P.M."/>
            <person name="Wu M."/>
            <person name="Xie G."/>
            <person name="Haft D.H."/>
            <person name="Sait M."/>
            <person name="Badger J."/>
            <person name="Barabote R.D."/>
            <person name="Bradley B."/>
            <person name="Brettin T.S."/>
            <person name="Brinkac L.M."/>
            <person name="Bruce D."/>
            <person name="Creasy T."/>
            <person name="Daugherty S.C."/>
            <person name="Davidsen T.M."/>
            <person name="DeBoy R.T."/>
            <person name="Detter J.C."/>
            <person name="Dodson R.J."/>
            <person name="Durkin A.S."/>
            <person name="Ganapathy A."/>
            <person name="Gwinn-Giglio M."/>
            <person name="Han C.S."/>
            <person name="Khouri H."/>
            <person name="Kiss H."/>
            <person name="Kothari S.P."/>
            <person name="Madupu R."/>
            <person name="Nelson K.E."/>
            <person name="Nelson W.C."/>
            <person name="Paulsen I."/>
            <person name="Penn K."/>
            <person name="Ren Q."/>
            <person name="Rosovitz M.J."/>
            <person name="Selengut J.D."/>
            <person name="Shrivastava S."/>
            <person name="Sullivan S.A."/>
            <person name="Tapia R."/>
            <person name="Thompson L.S."/>
            <person name="Watkins K.L."/>
            <person name="Yang Q."/>
            <person name="Yu C."/>
            <person name="Zafar N."/>
            <person name="Zhou L."/>
            <person name="Kuske C.R."/>
        </authorList>
    </citation>
    <scope>NUCLEOTIDE SEQUENCE [LARGE SCALE GENOMIC DNA]</scope>
    <source>
        <strain>ATCC 51196 / DSM 11244 / BCRC 80197 / JCM 7670 / NBRC 15755 / NCIMB 13165 / 161</strain>
    </source>
</reference>
<protein>
    <recommendedName>
        <fullName evidence="1">Chaperone protein DnaK</fullName>
    </recommendedName>
    <alternativeName>
        <fullName evidence="1">HSP70</fullName>
    </alternativeName>
    <alternativeName>
        <fullName evidence="1">Heat shock 70 kDa protein</fullName>
    </alternativeName>
    <alternativeName>
        <fullName evidence="1">Heat shock protein 70</fullName>
    </alternativeName>
</protein>
<evidence type="ECO:0000255" key="1">
    <source>
        <dbReference type="HAMAP-Rule" id="MF_00332"/>
    </source>
</evidence>
<evidence type="ECO:0000256" key="2">
    <source>
        <dbReference type="SAM" id="MobiDB-lite"/>
    </source>
</evidence>
<proteinExistence type="inferred from homology"/>
<keyword id="KW-0067">ATP-binding</keyword>
<keyword id="KW-0143">Chaperone</keyword>
<keyword id="KW-0547">Nucleotide-binding</keyword>
<keyword id="KW-0597">Phosphoprotein</keyword>
<keyword id="KW-1185">Reference proteome</keyword>
<keyword id="KW-0346">Stress response</keyword>
<dbReference type="EMBL" id="CP001472">
    <property type="protein sequence ID" value="ACO33100.1"/>
    <property type="molecule type" value="Genomic_DNA"/>
</dbReference>
<dbReference type="RefSeq" id="WP_015895965.1">
    <property type="nucleotide sequence ID" value="NC_012483.1"/>
</dbReference>
<dbReference type="SMR" id="C1F2D2"/>
<dbReference type="FunCoup" id="C1F2D2">
    <property type="interactions" value="638"/>
</dbReference>
<dbReference type="STRING" id="240015.ACP_0797"/>
<dbReference type="KEGG" id="aca:ACP_0797"/>
<dbReference type="eggNOG" id="COG0443">
    <property type="taxonomic scope" value="Bacteria"/>
</dbReference>
<dbReference type="HOGENOM" id="CLU_005965_2_1_0"/>
<dbReference type="InParanoid" id="C1F2D2"/>
<dbReference type="OrthoDB" id="9766019at2"/>
<dbReference type="Proteomes" id="UP000002207">
    <property type="component" value="Chromosome"/>
</dbReference>
<dbReference type="GO" id="GO:0005524">
    <property type="term" value="F:ATP binding"/>
    <property type="evidence" value="ECO:0007669"/>
    <property type="project" value="UniProtKB-UniRule"/>
</dbReference>
<dbReference type="GO" id="GO:0140662">
    <property type="term" value="F:ATP-dependent protein folding chaperone"/>
    <property type="evidence" value="ECO:0007669"/>
    <property type="project" value="InterPro"/>
</dbReference>
<dbReference type="GO" id="GO:0051082">
    <property type="term" value="F:unfolded protein binding"/>
    <property type="evidence" value="ECO:0007669"/>
    <property type="project" value="InterPro"/>
</dbReference>
<dbReference type="CDD" id="cd10234">
    <property type="entry name" value="ASKHA_NBD_HSP70_DnaK-like"/>
    <property type="match status" value="1"/>
</dbReference>
<dbReference type="FunFam" id="2.60.34.10:FF:000014">
    <property type="entry name" value="Chaperone protein DnaK HSP70"/>
    <property type="match status" value="1"/>
</dbReference>
<dbReference type="FunFam" id="1.20.1270.10:FF:000001">
    <property type="entry name" value="Molecular chaperone DnaK"/>
    <property type="match status" value="1"/>
</dbReference>
<dbReference type="FunFam" id="3.30.420.40:FF:000004">
    <property type="entry name" value="Molecular chaperone DnaK"/>
    <property type="match status" value="1"/>
</dbReference>
<dbReference type="FunFam" id="3.90.640.10:FF:000003">
    <property type="entry name" value="Molecular chaperone DnaK"/>
    <property type="match status" value="1"/>
</dbReference>
<dbReference type="Gene3D" id="1.20.1270.10">
    <property type="match status" value="1"/>
</dbReference>
<dbReference type="Gene3D" id="3.30.420.40">
    <property type="match status" value="2"/>
</dbReference>
<dbReference type="Gene3D" id="3.90.640.10">
    <property type="entry name" value="Actin, Chain A, domain 4"/>
    <property type="match status" value="1"/>
</dbReference>
<dbReference type="Gene3D" id="2.60.34.10">
    <property type="entry name" value="Substrate Binding Domain Of DNAk, Chain A, domain 1"/>
    <property type="match status" value="1"/>
</dbReference>
<dbReference type="HAMAP" id="MF_00332">
    <property type="entry name" value="DnaK"/>
    <property type="match status" value="1"/>
</dbReference>
<dbReference type="InterPro" id="IPR043129">
    <property type="entry name" value="ATPase_NBD"/>
</dbReference>
<dbReference type="InterPro" id="IPR012725">
    <property type="entry name" value="Chaperone_DnaK"/>
</dbReference>
<dbReference type="InterPro" id="IPR018181">
    <property type="entry name" value="Heat_shock_70_CS"/>
</dbReference>
<dbReference type="InterPro" id="IPR029048">
    <property type="entry name" value="HSP70_C_sf"/>
</dbReference>
<dbReference type="InterPro" id="IPR029047">
    <property type="entry name" value="HSP70_peptide-bd_sf"/>
</dbReference>
<dbReference type="InterPro" id="IPR013126">
    <property type="entry name" value="Hsp_70_fam"/>
</dbReference>
<dbReference type="NCBIfam" id="NF001413">
    <property type="entry name" value="PRK00290.1"/>
    <property type="match status" value="1"/>
</dbReference>
<dbReference type="NCBIfam" id="NF003520">
    <property type="entry name" value="PRK05183.1"/>
    <property type="match status" value="1"/>
</dbReference>
<dbReference type="NCBIfam" id="TIGR02350">
    <property type="entry name" value="prok_dnaK"/>
    <property type="match status" value="1"/>
</dbReference>
<dbReference type="PANTHER" id="PTHR19375">
    <property type="entry name" value="HEAT SHOCK PROTEIN 70KDA"/>
    <property type="match status" value="1"/>
</dbReference>
<dbReference type="Pfam" id="PF00012">
    <property type="entry name" value="HSP70"/>
    <property type="match status" value="1"/>
</dbReference>
<dbReference type="PRINTS" id="PR00301">
    <property type="entry name" value="HEATSHOCK70"/>
</dbReference>
<dbReference type="SUPFAM" id="SSF53067">
    <property type="entry name" value="Actin-like ATPase domain"/>
    <property type="match status" value="2"/>
</dbReference>
<dbReference type="SUPFAM" id="SSF100934">
    <property type="entry name" value="Heat shock protein 70kD (HSP70), C-terminal subdomain"/>
    <property type="match status" value="1"/>
</dbReference>
<dbReference type="SUPFAM" id="SSF100920">
    <property type="entry name" value="Heat shock protein 70kD (HSP70), peptide-binding domain"/>
    <property type="match status" value="1"/>
</dbReference>
<dbReference type="PROSITE" id="PS00297">
    <property type="entry name" value="HSP70_1"/>
    <property type="match status" value="1"/>
</dbReference>
<dbReference type="PROSITE" id="PS00329">
    <property type="entry name" value="HSP70_2"/>
    <property type="match status" value="1"/>
</dbReference>
<dbReference type="PROSITE" id="PS01036">
    <property type="entry name" value="HSP70_3"/>
    <property type="match status" value="1"/>
</dbReference>
<name>DNAK_ACIC5</name>
<comment type="function">
    <text evidence="1">Acts as a chaperone.</text>
</comment>
<comment type="induction">
    <text evidence="1">By stress conditions e.g. heat shock.</text>
</comment>
<comment type="similarity">
    <text evidence="1">Belongs to the heat shock protein 70 family.</text>
</comment>
<feature type="chain" id="PRO_1000133124" description="Chaperone protein DnaK">
    <location>
        <begin position="1"/>
        <end position="639"/>
    </location>
</feature>
<feature type="region of interest" description="Disordered" evidence="2">
    <location>
        <begin position="601"/>
        <end position="639"/>
    </location>
</feature>
<feature type="compositionally biased region" description="Low complexity" evidence="2">
    <location>
        <begin position="601"/>
        <end position="618"/>
    </location>
</feature>
<feature type="compositionally biased region" description="Acidic residues" evidence="2">
    <location>
        <begin position="627"/>
        <end position="639"/>
    </location>
</feature>
<feature type="modified residue" description="Phosphothreonine; by autocatalysis" evidence="1">
    <location>
        <position position="195"/>
    </location>
</feature>
<gene>
    <name evidence="1" type="primary">dnaK</name>
    <name type="ordered locus">ACP_0797</name>
</gene>